<sequence>MIREERLLKVLRAPHISEKATMSAEKSNTIVFKVAKDATKKEIKAAVEKLFEVEVKSVNTLIIKGKTKRQGLRQGRRSDVKKAYVTLNEGQDLDFVGGAE</sequence>
<name>RL23_VIBCM</name>
<keyword id="KW-0687">Ribonucleoprotein</keyword>
<keyword id="KW-0689">Ribosomal protein</keyword>
<keyword id="KW-0694">RNA-binding</keyword>
<keyword id="KW-0699">rRNA-binding</keyword>
<gene>
    <name evidence="1" type="primary">rplW</name>
    <name type="ordered locus">VCM66_2514</name>
</gene>
<protein>
    <recommendedName>
        <fullName evidence="1">Large ribosomal subunit protein uL23</fullName>
    </recommendedName>
    <alternativeName>
        <fullName evidence="2">50S ribosomal protein L23</fullName>
    </alternativeName>
</protein>
<proteinExistence type="inferred from homology"/>
<feature type="chain" id="PRO_1000184114" description="Large ribosomal subunit protein uL23">
    <location>
        <begin position="1"/>
        <end position="100"/>
    </location>
</feature>
<accession>C3LRQ6</accession>
<dbReference type="EMBL" id="CP001233">
    <property type="protein sequence ID" value="ACP06811.1"/>
    <property type="molecule type" value="Genomic_DNA"/>
</dbReference>
<dbReference type="RefSeq" id="WP_000617542.1">
    <property type="nucleotide sequence ID" value="NC_012578.1"/>
</dbReference>
<dbReference type="SMR" id="C3LRQ6"/>
<dbReference type="GeneID" id="88785153"/>
<dbReference type="KEGG" id="vcm:VCM66_2514"/>
<dbReference type="HOGENOM" id="CLU_037562_3_1_6"/>
<dbReference type="Proteomes" id="UP000001217">
    <property type="component" value="Chromosome I"/>
</dbReference>
<dbReference type="GO" id="GO:1990904">
    <property type="term" value="C:ribonucleoprotein complex"/>
    <property type="evidence" value="ECO:0007669"/>
    <property type="project" value="UniProtKB-KW"/>
</dbReference>
<dbReference type="GO" id="GO:0005840">
    <property type="term" value="C:ribosome"/>
    <property type="evidence" value="ECO:0007669"/>
    <property type="project" value="UniProtKB-KW"/>
</dbReference>
<dbReference type="GO" id="GO:0019843">
    <property type="term" value="F:rRNA binding"/>
    <property type="evidence" value="ECO:0007669"/>
    <property type="project" value="UniProtKB-UniRule"/>
</dbReference>
<dbReference type="GO" id="GO:0003735">
    <property type="term" value="F:structural constituent of ribosome"/>
    <property type="evidence" value="ECO:0007669"/>
    <property type="project" value="InterPro"/>
</dbReference>
<dbReference type="GO" id="GO:0006412">
    <property type="term" value="P:translation"/>
    <property type="evidence" value="ECO:0007669"/>
    <property type="project" value="UniProtKB-UniRule"/>
</dbReference>
<dbReference type="FunFam" id="3.30.70.330:FF:000001">
    <property type="entry name" value="50S ribosomal protein L23"/>
    <property type="match status" value="1"/>
</dbReference>
<dbReference type="Gene3D" id="3.30.70.330">
    <property type="match status" value="1"/>
</dbReference>
<dbReference type="HAMAP" id="MF_01369_B">
    <property type="entry name" value="Ribosomal_uL23_B"/>
    <property type="match status" value="1"/>
</dbReference>
<dbReference type="InterPro" id="IPR012677">
    <property type="entry name" value="Nucleotide-bd_a/b_plait_sf"/>
</dbReference>
<dbReference type="InterPro" id="IPR013025">
    <property type="entry name" value="Ribosomal_uL23-like"/>
</dbReference>
<dbReference type="InterPro" id="IPR012678">
    <property type="entry name" value="Ribosomal_uL23/eL15/eS24_sf"/>
</dbReference>
<dbReference type="InterPro" id="IPR001014">
    <property type="entry name" value="Ribosomal_uL23_CS"/>
</dbReference>
<dbReference type="NCBIfam" id="NF004358">
    <property type="entry name" value="PRK05738.1-1"/>
    <property type="match status" value="1"/>
</dbReference>
<dbReference type="NCBIfam" id="NF004359">
    <property type="entry name" value="PRK05738.1-3"/>
    <property type="match status" value="1"/>
</dbReference>
<dbReference type="NCBIfam" id="NF004360">
    <property type="entry name" value="PRK05738.1-5"/>
    <property type="match status" value="1"/>
</dbReference>
<dbReference type="NCBIfam" id="NF004363">
    <property type="entry name" value="PRK05738.2-4"/>
    <property type="match status" value="1"/>
</dbReference>
<dbReference type="PANTHER" id="PTHR11620">
    <property type="entry name" value="60S RIBOSOMAL PROTEIN L23A"/>
    <property type="match status" value="1"/>
</dbReference>
<dbReference type="Pfam" id="PF00276">
    <property type="entry name" value="Ribosomal_L23"/>
    <property type="match status" value="1"/>
</dbReference>
<dbReference type="SUPFAM" id="SSF54189">
    <property type="entry name" value="Ribosomal proteins S24e, L23 and L15e"/>
    <property type="match status" value="1"/>
</dbReference>
<dbReference type="PROSITE" id="PS00050">
    <property type="entry name" value="RIBOSOMAL_L23"/>
    <property type="match status" value="1"/>
</dbReference>
<reference key="1">
    <citation type="journal article" date="2008" name="PLoS ONE">
        <title>A recalibrated molecular clock and independent origins for the cholera pandemic clones.</title>
        <authorList>
            <person name="Feng L."/>
            <person name="Reeves P.R."/>
            <person name="Lan R."/>
            <person name="Ren Y."/>
            <person name="Gao C."/>
            <person name="Zhou Z."/>
            <person name="Ren Y."/>
            <person name="Cheng J."/>
            <person name="Wang W."/>
            <person name="Wang J."/>
            <person name="Qian W."/>
            <person name="Li D."/>
            <person name="Wang L."/>
        </authorList>
    </citation>
    <scope>NUCLEOTIDE SEQUENCE [LARGE SCALE GENOMIC DNA]</scope>
    <source>
        <strain>M66-2</strain>
    </source>
</reference>
<organism>
    <name type="scientific">Vibrio cholerae serotype O1 (strain M66-2)</name>
    <dbReference type="NCBI Taxonomy" id="579112"/>
    <lineage>
        <taxon>Bacteria</taxon>
        <taxon>Pseudomonadati</taxon>
        <taxon>Pseudomonadota</taxon>
        <taxon>Gammaproteobacteria</taxon>
        <taxon>Vibrionales</taxon>
        <taxon>Vibrionaceae</taxon>
        <taxon>Vibrio</taxon>
    </lineage>
</organism>
<comment type="function">
    <text evidence="1">One of the early assembly proteins it binds 23S rRNA. One of the proteins that surrounds the polypeptide exit tunnel on the outside of the ribosome. Forms the main docking site for trigger factor binding to the ribosome.</text>
</comment>
<comment type="subunit">
    <text evidence="1">Part of the 50S ribosomal subunit. Contacts protein L29, and trigger factor when it is bound to the ribosome.</text>
</comment>
<comment type="similarity">
    <text evidence="1">Belongs to the universal ribosomal protein uL23 family.</text>
</comment>
<evidence type="ECO:0000255" key="1">
    <source>
        <dbReference type="HAMAP-Rule" id="MF_01369"/>
    </source>
</evidence>
<evidence type="ECO:0000305" key="2"/>